<proteinExistence type="evidence at protein level"/>
<keyword id="KW-0067">ATP-binding</keyword>
<keyword id="KW-0325">Glycoprotein</keyword>
<keyword id="KW-1017">Isopeptide bond</keyword>
<keyword id="KW-0472">Membrane</keyword>
<keyword id="KW-0547">Nucleotide-binding</keyword>
<keyword id="KW-0589">Pheromone response</keyword>
<keyword id="KW-1185">Reference proteome</keyword>
<keyword id="KW-0677">Repeat</keyword>
<keyword id="KW-1278">Translocase</keyword>
<keyword id="KW-0812">Transmembrane</keyword>
<keyword id="KW-1133">Transmembrane helix</keyword>
<keyword id="KW-0813">Transport</keyword>
<keyword id="KW-0832">Ubl conjugation</keyword>
<gene>
    <name type="primary">STE6</name>
    <name type="ordered locus">YKL209C</name>
</gene>
<evidence type="ECO:0000255" key="1"/>
<evidence type="ECO:0000255" key="2">
    <source>
        <dbReference type="PROSITE-ProRule" id="PRU00434"/>
    </source>
</evidence>
<evidence type="ECO:0000255" key="3">
    <source>
        <dbReference type="PROSITE-ProRule" id="PRU00441"/>
    </source>
</evidence>
<evidence type="ECO:0000269" key="4">
    <source>
    </source>
</evidence>
<evidence type="ECO:0000269" key="5">
    <source>
    </source>
</evidence>
<evidence type="ECO:0000269" key="6">
    <source>
    </source>
</evidence>
<evidence type="ECO:0000305" key="7"/>
<reference key="1">
    <citation type="journal article" date="1989" name="Nature">
        <title>The yeast STE6 gene encodes a homologue of the mammalian multidrug resistance P-glycoprotein.</title>
        <authorList>
            <person name="McGrath J.P."/>
            <person name="Varshavsky A."/>
        </authorList>
    </citation>
    <scope>NUCLEOTIDE SEQUENCE [GENOMIC DNA]</scope>
    <source>
        <strain>ATCC 204508 / S288c</strain>
    </source>
</reference>
<reference key="2">
    <citation type="journal article" date="1989" name="EMBO J.">
        <title>Saccharomyces cerevisiae STE6 gene product: a novel pathway for protein export in eukaryotic cells.</title>
        <authorList>
            <person name="Kuchler K."/>
            <person name="Sterne R.E."/>
            <person name="Thorner J.W."/>
        </authorList>
    </citation>
    <scope>NUCLEOTIDE SEQUENCE [GENOMIC DNA]</scope>
</reference>
<reference key="3">
    <citation type="journal article" date="1994" name="Nature">
        <title>Complete DNA sequence of yeast chromosome XI.</title>
        <authorList>
            <person name="Dujon B."/>
            <person name="Alexandraki D."/>
            <person name="Andre B."/>
            <person name="Ansorge W."/>
            <person name="Baladron V."/>
            <person name="Ballesta J.P.G."/>
            <person name="Banrevi A."/>
            <person name="Bolle P.-A."/>
            <person name="Bolotin-Fukuhara M."/>
            <person name="Bossier P."/>
            <person name="Bou G."/>
            <person name="Boyer J."/>
            <person name="Buitrago M.J."/>
            <person name="Cheret G."/>
            <person name="Colleaux L."/>
            <person name="Daignan-Fornier B."/>
            <person name="del Rey F."/>
            <person name="Dion C."/>
            <person name="Domdey H."/>
            <person name="Duesterhoeft A."/>
            <person name="Duesterhus S."/>
            <person name="Entian K.-D."/>
            <person name="Erfle H."/>
            <person name="Esteban P.F."/>
            <person name="Feldmann H."/>
            <person name="Fernandes L."/>
            <person name="Fobo G.M."/>
            <person name="Fritz C."/>
            <person name="Fukuhara H."/>
            <person name="Gabel C."/>
            <person name="Gaillon L."/>
            <person name="Garcia-Cantalejo J.M."/>
            <person name="Garcia-Ramirez J.J."/>
            <person name="Gent M.E."/>
            <person name="Ghazvini M."/>
            <person name="Goffeau A."/>
            <person name="Gonzalez A."/>
            <person name="Grothues D."/>
            <person name="Guerreiro P."/>
            <person name="Hegemann J.H."/>
            <person name="Hewitt N."/>
            <person name="Hilger F."/>
            <person name="Hollenberg C.P."/>
            <person name="Horaitis O."/>
            <person name="Indge K.J."/>
            <person name="Jacquier A."/>
            <person name="James C.M."/>
            <person name="Jauniaux J.-C."/>
            <person name="Jimenez A."/>
            <person name="Keuchel H."/>
            <person name="Kirchrath L."/>
            <person name="Kleine K."/>
            <person name="Koetter P."/>
            <person name="Legrain P."/>
            <person name="Liebl S."/>
            <person name="Louis E.J."/>
            <person name="Maia e Silva A."/>
            <person name="Marck C."/>
            <person name="Monnier A.-L."/>
            <person name="Moestl D."/>
            <person name="Mueller S."/>
            <person name="Obermaier B."/>
            <person name="Oliver S.G."/>
            <person name="Pallier C."/>
            <person name="Pascolo S."/>
            <person name="Pfeiffer F."/>
            <person name="Philippsen P."/>
            <person name="Planta R.J."/>
            <person name="Pohl F.M."/>
            <person name="Pohl T.M."/>
            <person name="Poehlmann R."/>
            <person name="Portetelle D."/>
            <person name="Purnelle B."/>
            <person name="Puzos V."/>
            <person name="Ramezani Rad M."/>
            <person name="Rasmussen S.W."/>
            <person name="Remacha M.A."/>
            <person name="Revuelta J.L."/>
            <person name="Richard G.-F."/>
            <person name="Rieger M."/>
            <person name="Rodrigues-Pousada C."/>
            <person name="Rose M."/>
            <person name="Rupp T."/>
            <person name="Santos M.A."/>
            <person name="Schwager C."/>
            <person name="Sensen C."/>
            <person name="Skala J."/>
            <person name="Soares H."/>
            <person name="Sor F."/>
            <person name="Stegemann J."/>
            <person name="Tettelin H."/>
            <person name="Thierry A."/>
            <person name="Tzermia M."/>
            <person name="Urrestarazu L.A."/>
            <person name="van Dyck L."/>
            <person name="van Vliet-Reedijk J.C."/>
            <person name="Valens M."/>
            <person name="Vandenbol M."/>
            <person name="Vilela C."/>
            <person name="Vissers S."/>
            <person name="von Wettstein D."/>
            <person name="Voss H."/>
            <person name="Wiemann S."/>
            <person name="Xu G."/>
            <person name="Zimmermann J."/>
            <person name="Haasemann M."/>
            <person name="Becker I."/>
            <person name="Mewes H.-W."/>
        </authorList>
    </citation>
    <scope>NUCLEOTIDE SEQUENCE [LARGE SCALE GENOMIC DNA]</scope>
    <source>
        <strain>ATCC 204508 / S288c</strain>
    </source>
</reference>
<reference key="4">
    <citation type="journal article" date="2014" name="G3 (Bethesda)">
        <title>The reference genome sequence of Saccharomyces cerevisiae: Then and now.</title>
        <authorList>
            <person name="Engel S.R."/>
            <person name="Dietrich F.S."/>
            <person name="Fisk D.G."/>
            <person name="Binkley G."/>
            <person name="Balakrishnan R."/>
            <person name="Costanzo M.C."/>
            <person name="Dwight S.S."/>
            <person name="Hitz B.C."/>
            <person name="Karra K."/>
            <person name="Nash R.S."/>
            <person name="Weng S."/>
            <person name="Wong E.D."/>
            <person name="Lloyd P."/>
            <person name="Skrzypek M.S."/>
            <person name="Miyasato S.R."/>
            <person name="Simison M."/>
            <person name="Cherry J.M."/>
        </authorList>
    </citation>
    <scope>GENOME REANNOTATION</scope>
    <source>
        <strain>ATCC 204508 / S288c</strain>
    </source>
</reference>
<reference key="5">
    <citation type="journal article" date="1986" name="Proc. Natl. Acad. Sci. U.S.A.">
        <title>Sequences upstream of the STE6 gene required for its expression and regulation by the mating type locus in Saccharomyces cerevisiae.</title>
        <authorList>
            <person name="Wilson K.L."/>
            <person name="Herskowitz I."/>
        </authorList>
    </citation>
    <scope>NUCLEOTIDE SEQUENCE [GENOMIC DNA] OF 1-41</scope>
</reference>
<reference key="6">
    <citation type="journal article" date="1991" name="EMBO J.">
        <title>Mutational analysis of the yeast a-factor transporter STE6, a member of the ATP binding cassette (ABC) protein superfamily.</title>
        <authorList>
            <person name="Berkover C."/>
            <person name="Michaelis S."/>
        </authorList>
    </citation>
    <scope>MUTAGENESIS</scope>
</reference>
<reference key="7">
    <citation type="journal article" date="1994" name="EMBO J.">
        <title>The ABC-transporter Ste6 accumulates in the plasma membrane in a ubiquitinated form in endocytosis mutants.</title>
        <authorList>
            <person name="Koelling R."/>
            <person name="Hollenberg C."/>
        </authorList>
    </citation>
    <scope>DEGRADATION BY UBIQUITINATION</scope>
</reference>
<reference key="8">
    <citation type="journal article" date="1996" name="J. Biol. Chem.">
        <title>Comparative topology studies in Saccharomyces cerevisiae and in Escherichia coli. The N-terminal half of the yeast ABC protein Ste6.</title>
        <authorList>
            <person name="Geller D."/>
            <person name="Taglicht D."/>
            <person name="Edgar R."/>
            <person name="Tam A."/>
            <person name="Pines O."/>
            <person name="Michaelis S."/>
            <person name="Bibi E."/>
        </authorList>
    </citation>
    <scope>TOPOLOGY</scope>
</reference>
<reference key="9">
    <citation type="journal article" date="2003" name="Nat. Biotechnol.">
        <title>A proteomics approach to understanding protein ubiquitination.</title>
        <authorList>
            <person name="Peng J."/>
            <person name="Schwartz D."/>
            <person name="Elias J.E."/>
            <person name="Thoreen C.C."/>
            <person name="Cheng D."/>
            <person name="Marsischky G."/>
            <person name="Roelofs J."/>
            <person name="Finley D."/>
            <person name="Gygi S.P."/>
        </authorList>
    </citation>
    <scope>UBIQUITINATION [LARGE SCALE ANALYSIS] AT LYS-1022</scope>
    <scope>IDENTIFICATION BY MASS SPECTROMETRY</scope>
    <source>
        <strain>SUB592</strain>
    </source>
</reference>
<reference key="10">
    <citation type="journal article" date="2006" name="Proc. Natl. Acad. Sci. U.S.A.">
        <title>A global topology map of the Saccharomyces cerevisiae membrane proteome.</title>
        <authorList>
            <person name="Kim H."/>
            <person name="Melen K."/>
            <person name="Oesterberg M."/>
            <person name="von Heijne G."/>
        </authorList>
    </citation>
    <scope>TOPOLOGY [LARGE SCALE ANALYSIS]</scope>
    <source>
        <strain>ATCC 208353 / W303-1A</strain>
    </source>
</reference>
<name>STE6_YEAST</name>
<sequence>MNFLSFKTTKHYHIFRYVNIRNDYRLLMIMIIGTVATGLVPAITSILTGRVFDLLSVFVANGSHQGLYSQLVQRSMAVMALGAASVPVMWLSLTSWMHIGERQGFRIRSQILEAYLEEKPMEWYDNNEKLLGDFTQINRCVEELRSSSAEASAITFQNLVAICALLGTSFYYSWSLTLIILCSSPIITFFAVVFSRMIHVYSEKENSETSKAAQLLTWSMNAAQLVRLYCTQRLERKKFKEIILNCNTFFIKSCFFVAANAGILRFLTLTMFVQGFWFGSAMIKKGKLNINDVITCFHSCIMLGSTLNNTLHQIVVLQKGGVAMEKIMTLLKDGSKRNPLNKTVAHQFPLDYATSDLTFANVSFSYPSRPSEAVLKNVSLNFSAGQFTFIVGKSGSGKSTLSNLLLRFYDGYNGSISINGHNIQTIDQKLLIENITVVEQRCTLFNDTLRKNILLGSTDSVRNADCSTNENRHLIKDACQMALLDRFILDLPDGLETLIGTGGVTLSGGQQQRVAIARAFIRDTPILFLDEAVSALDIVHRNLLMKAIRHWRKGKTTIILTHELSQIESDDYLYLMKEGEVVESGTQSELLADPTTTFSTWYHLQNDYSDAKTIVDTETEEKSIHTVESFNSQLETPKLGSCLSNLGYDETDQLSFYEAIYQKRSNVRTRRVKVEEENIGYALKQQKNTESSTGPQLLSIIQIIKRMIKSIRYKKILILGLLCSLIAGATNPVFSYTFSFLLEGIVPSTDGKTGSSHYLAKWSLLVLGVAAADGIFNFAKGFLLDCCSEYWVMDLRNEVMEKLTRKNMDWFSGENNKASEISALVLNDLRDLRSLVSEFLSAMTSFVTVSTIGLIWALVSGWKLSLVCISMFPLIIIFSAIYGGILQKCETDYKTSVAQLENCLYQIVTNIKTIKCLQAEFHFQLTYHDLKIKMQQIASKRAIATGFGISMTNMIVMCIQAIIYYYGLKLVMIHEYTSKEMFTTFTLLLFTIMSCTSLVSQIPDISRGQRAASWIYRILDEKHNTLEVENNNARTVGIAGHTYHGKEKKPIVSIQNLTFAYPSAPTAFVYKNMNFDMFCGQTLGIIGESGTGKSTLVLLLTKLYNCEVGKIKIDGTDVNDWNLTSLRKEISVVEQKPLLFNGTIRDNLTYGLQDEILEIEMYDALKYVGIHDFVISSPQGLDTRIDTTLLSGGQAQRLCIARALLRKSKILILDECTSALDSVSSSIINEIVKKGPPALLTMVITHSEQMMRSCNSIAVLKDGKVVERGNFDTLYNNRGELFQIVSNQSS</sequence>
<accession>P12866</accession>
<accession>D6VWZ4</accession>
<organism>
    <name type="scientific">Saccharomyces cerevisiae (strain ATCC 204508 / S288c)</name>
    <name type="common">Baker's yeast</name>
    <dbReference type="NCBI Taxonomy" id="559292"/>
    <lineage>
        <taxon>Eukaryota</taxon>
        <taxon>Fungi</taxon>
        <taxon>Dikarya</taxon>
        <taxon>Ascomycota</taxon>
        <taxon>Saccharomycotina</taxon>
        <taxon>Saccharomycetes</taxon>
        <taxon>Saccharomycetales</taxon>
        <taxon>Saccharomycetaceae</taxon>
        <taxon>Saccharomyces</taxon>
    </lineage>
</organism>
<feature type="chain" id="PRO_0000093370" description="Alpha-factor-transporting ATPase">
    <location>
        <begin position="1"/>
        <end position="1290"/>
    </location>
</feature>
<feature type="topological domain" description="Cytoplasmic" evidence="7">
    <location>
        <begin position="1"/>
        <end position="25"/>
    </location>
</feature>
<feature type="transmembrane region" description="Helical" evidence="7">
    <location>
        <begin position="26"/>
        <end position="46"/>
    </location>
</feature>
<feature type="topological domain" description="Extracellular" evidence="7">
    <location>
        <begin position="47"/>
        <end position="75"/>
    </location>
</feature>
<feature type="transmembrane region" description="Helical" evidence="7">
    <location>
        <begin position="76"/>
        <end position="96"/>
    </location>
</feature>
<feature type="topological domain" description="Cytoplasmic" evidence="7">
    <location>
        <begin position="97"/>
        <end position="150"/>
    </location>
</feature>
<feature type="transmembrane region" description="Helical" evidence="7">
    <location>
        <begin position="151"/>
        <end position="171"/>
    </location>
</feature>
<feature type="topological domain" description="Extracellular" evidence="7">
    <location>
        <begin position="172"/>
        <end position="173"/>
    </location>
</feature>
<feature type="transmembrane region" description="Helical" evidence="7">
    <location>
        <begin position="174"/>
        <end position="194"/>
    </location>
</feature>
<feature type="topological domain" description="Cytoplasmic" evidence="7">
    <location>
        <begin position="195"/>
        <end position="262"/>
    </location>
</feature>
<feature type="transmembrane region" description="Helical" evidence="7">
    <location>
        <begin position="263"/>
        <end position="283"/>
    </location>
</feature>
<feature type="topological domain" description="Extracellular" evidence="7">
    <location>
        <begin position="284"/>
        <end position="296"/>
    </location>
</feature>
<feature type="transmembrane region" description="Helical" evidence="7">
    <location>
        <begin position="297"/>
        <end position="317"/>
    </location>
</feature>
<feature type="topological domain" description="Cytoplasmic" evidence="7">
    <location>
        <begin position="318"/>
        <end position="715"/>
    </location>
</feature>
<feature type="transmembrane region" description="Helical" evidence="7">
    <location>
        <begin position="716"/>
        <end position="736"/>
    </location>
</feature>
<feature type="topological domain" description="Extracellular" evidence="7">
    <location>
        <begin position="737"/>
        <end position="763"/>
    </location>
</feature>
<feature type="transmembrane region" description="Helical" evidence="7">
    <location>
        <begin position="764"/>
        <end position="784"/>
    </location>
</feature>
<feature type="topological domain" description="Cytoplasmic" evidence="7">
    <location>
        <begin position="785"/>
        <end position="838"/>
    </location>
</feature>
<feature type="transmembrane region" description="Helical" evidence="7">
    <location>
        <begin position="839"/>
        <end position="859"/>
    </location>
</feature>
<feature type="topological domain" description="Extracellular" evidence="7">
    <location>
        <begin position="860"/>
        <end position="865"/>
    </location>
</feature>
<feature type="transmembrane region" description="Helical" evidence="7">
    <location>
        <begin position="866"/>
        <end position="886"/>
    </location>
</feature>
<feature type="topological domain" description="Cytoplasmic" evidence="7">
    <location>
        <begin position="887"/>
        <end position="945"/>
    </location>
</feature>
<feature type="transmembrane region" description="Helical" evidence="7">
    <location>
        <begin position="946"/>
        <end position="966"/>
    </location>
</feature>
<feature type="topological domain" description="Extracellular" evidence="7">
    <location>
        <begin position="967"/>
        <end position="981"/>
    </location>
</feature>
<feature type="transmembrane region" description="Helical" evidence="7">
    <location>
        <begin position="982"/>
        <end position="1002"/>
    </location>
</feature>
<feature type="topological domain" description="Cytoplasmic" evidence="7">
    <location>
        <begin position="1003"/>
        <end position="1290"/>
    </location>
</feature>
<feature type="domain" description="ABC transmembrane type-1 1" evidence="3">
    <location>
        <begin position="27"/>
        <end position="319"/>
    </location>
</feature>
<feature type="domain" description="ABC transporter 1" evidence="2">
    <location>
        <begin position="357"/>
        <end position="603"/>
    </location>
</feature>
<feature type="domain" description="ABC transmembrane type-1 2" evidence="3">
    <location>
        <begin position="717"/>
        <end position="1007"/>
    </location>
</feature>
<feature type="domain" description="ABC transporter 2" evidence="2">
    <location>
        <begin position="1052"/>
        <end position="1287"/>
    </location>
</feature>
<feature type="binding site" evidence="2">
    <location>
        <begin position="392"/>
        <end position="399"/>
    </location>
    <ligand>
        <name>ATP</name>
        <dbReference type="ChEBI" id="CHEBI:30616"/>
        <label>1</label>
    </ligand>
</feature>
<feature type="binding site" evidence="2">
    <location>
        <begin position="1087"/>
        <end position="1094"/>
    </location>
    <ligand>
        <name>ATP</name>
        <dbReference type="ChEBI" id="CHEBI:30616"/>
        <label>2</label>
    </ligand>
</feature>
<feature type="glycosylation site" description="N-linked (GlcNAc...) asparagine" evidence="1">
    <location>
        <position position="61"/>
    </location>
</feature>
<feature type="cross-link" description="Glycyl lysine isopeptide (Lys-Gly) (interchain with G-Cter in ubiquitin)" evidence="4">
    <location>
        <position position="1022"/>
    </location>
</feature>
<feature type="mutagenesis site" description="0.8% mating activity." evidence="5">
    <original>G</original>
    <variation>V</variation>
    <location>
        <position position="392"/>
    </location>
</feature>
<feature type="mutagenesis site" description="25% mating activity." evidence="5">
    <original>K</original>
    <variation>A</variation>
    <location>
        <position position="398"/>
    </location>
</feature>
<feature type="mutagenesis site" description="1% mating activity." evidence="5">
    <original>K</original>
    <variation>R</variation>
    <location>
        <position position="398"/>
    </location>
</feature>
<feature type="mutagenesis site" description="0.5% mating activity." evidence="5">
    <original>G</original>
    <variation>D</variation>
    <location>
        <position position="509"/>
    </location>
</feature>
<feature type="mutagenesis site" description="0.3% mating activity." evidence="5">
    <original>G</original>
    <variation>V</variation>
    <location>
        <position position="1087"/>
    </location>
</feature>
<feature type="mutagenesis site" description="26% mating activity." evidence="5">
    <original>K</original>
    <variation>A</variation>
    <location>
        <position position="1093"/>
    </location>
</feature>
<feature type="mutagenesis site" description="15% mating activity." evidence="5">
    <original>K</original>
    <variation>R</variation>
    <location>
        <position position="1093"/>
    </location>
</feature>
<feature type="mutagenesis site" description="6% mating activity." evidence="5">
    <original>G</original>
    <variation>D</variation>
    <location>
        <position position="1193"/>
    </location>
</feature>
<dbReference type="EC" id="7.4.2.7"/>
<dbReference type="EMBL" id="X15428">
    <property type="protein sequence ID" value="CAA33467.1"/>
    <property type="molecule type" value="Genomic_DNA"/>
</dbReference>
<dbReference type="EMBL" id="M26376">
    <property type="protein sequence ID" value="AAA35116.1"/>
    <property type="molecule type" value="Genomic_DNA"/>
</dbReference>
<dbReference type="EMBL" id="Z28209">
    <property type="protein sequence ID" value="CAA82054.1"/>
    <property type="molecule type" value="Genomic_DNA"/>
</dbReference>
<dbReference type="EMBL" id="M12842">
    <property type="protein sequence ID" value="AAA35117.1"/>
    <property type="molecule type" value="Genomic_DNA"/>
</dbReference>
<dbReference type="EMBL" id="BK006944">
    <property type="protein sequence ID" value="DAA08960.1"/>
    <property type="molecule type" value="Genomic_DNA"/>
</dbReference>
<dbReference type="PIR" id="S05789">
    <property type="entry name" value="DVBYS6"/>
</dbReference>
<dbReference type="RefSeq" id="NP_012713.1">
    <property type="nucleotide sequence ID" value="NM_001179774.1"/>
</dbReference>
<dbReference type="SMR" id="P12866"/>
<dbReference type="BioGRID" id="33956">
    <property type="interactions" value="144"/>
</dbReference>
<dbReference type="DIP" id="DIP-2594N"/>
<dbReference type="FunCoup" id="P12866">
    <property type="interactions" value="1013"/>
</dbReference>
<dbReference type="IntAct" id="P12866">
    <property type="interactions" value="26"/>
</dbReference>
<dbReference type="MINT" id="P12866"/>
<dbReference type="STRING" id="4932.YKL209C"/>
<dbReference type="TCDB" id="3.A.1.206.1">
    <property type="family name" value="the atp-binding cassette (abc) superfamily"/>
</dbReference>
<dbReference type="GlyCosmos" id="P12866">
    <property type="glycosylation" value="1 site, No reported glycans"/>
</dbReference>
<dbReference type="GlyGen" id="P12866">
    <property type="glycosylation" value="1 site"/>
</dbReference>
<dbReference type="iPTMnet" id="P12866"/>
<dbReference type="PaxDb" id="4932-YKL209C"/>
<dbReference type="PeptideAtlas" id="P12866"/>
<dbReference type="EnsemblFungi" id="YKL209C_mRNA">
    <property type="protein sequence ID" value="YKL209C"/>
    <property type="gene ID" value="YKL209C"/>
</dbReference>
<dbReference type="GeneID" id="853671"/>
<dbReference type="KEGG" id="sce:YKL209C"/>
<dbReference type="AGR" id="SGD:S000001692"/>
<dbReference type="SGD" id="S000001692">
    <property type="gene designation" value="STE6"/>
</dbReference>
<dbReference type="VEuPathDB" id="FungiDB:YKL209C"/>
<dbReference type="eggNOG" id="KOG0055">
    <property type="taxonomic scope" value="Eukaryota"/>
</dbReference>
<dbReference type="HOGENOM" id="CLU_000604_17_2_1"/>
<dbReference type="InParanoid" id="P12866"/>
<dbReference type="OMA" id="TFWACLT"/>
<dbReference type="OrthoDB" id="6500128at2759"/>
<dbReference type="BioCyc" id="YEAST:G3O-31968-MONOMER"/>
<dbReference type="BRENDA" id="7.4.2.7">
    <property type="organism ID" value="984"/>
</dbReference>
<dbReference type="BioGRID-ORCS" id="853671">
    <property type="hits" value="0 hits in 10 CRISPR screens"/>
</dbReference>
<dbReference type="PRO" id="PR:P12866"/>
<dbReference type="Proteomes" id="UP000002311">
    <property type="component" value="Chromosome XI"/>
</dbReference>
<dbReference type="RNAct" id="P12866">
    <property type="molecule type" value="protein"/>
</dbReference>
<dbReference type="GO" id="GO:0000324">
    <property type="term" value="C:fungal-type vacuole"/>
    <property type="evidence" value="ECO:0007005"/>
    <property type="project" value="SGD"/>
</dbReference>
<dbReference type="GO" id="GO:0005794">
    <property type="term" value="C:Golgi apparatus"/>
    <property type="evidence" value="ECO:0000314"/>
    <property type="project" value="SGD"/>
</dbReference>
<dbReference type="GO" id="GO:0043332">
    <property type="term" value="C:mating projection tip"/>
    <property type="evidence" value="ECO:0000314"/>
    <property type="project" value="SGD"/>
</dbReference>
<dbReference type="GO" id="GO:0005743">
    <property type="term" value="C:mitochondrial inner membrane"/>
    <property type="evidence" value="ECO:0000318"/>
    <property type="project" value="GO_Central"/>
</dbReference>
<dbReference type="GO" id="GO:0005886">
    <property type="term" value="C:plasma membrane"/>
    <property type="evidence" value="ECO:0000314"/>
    <property type="project" value="SGD"/>
</dbReference>
<dbReference type="GO" id="GO:0015421">
    <property type="term" value="F:ABC-type oligopeptide transporter activity"/>
    <property type="evidence" value="ECO:0000318"/>
    <property type="project" value="GO_Central"/>
</dbReference>
<dbReference type="GO" id="GO:0015440">
    <property type="term" value="F:ABC-type peptide transporter activity"/>
    <property type="evidence" value="ECO:0000314"/>
    <property type="project" value="SGD"/>
</dbReference>
<dbReference type="GO" id="GO:0005524">
    <property type="term" value="F:ATP binding"/>
    <property type="evidence" value="ECO:0007669"/>
    <property type="project" value="UniProtKB-KW"/>
</dbReference>
<dbReference type="GO" id="GO:0016887">
    <property type="term" value="F:ATP hydrolysis activity"/>
    <property type="evidence" value="ECO:0007669"/>
    <property type="project" value="InterPro"/>
</dbReference>
<dbReference type="GO" id="GO:0090374">
    <property type="term" value="P:oligopeptide export from mitochondrion"/>
    <property type="evidence" value="ECO:0000318"/>
    <property type="project" value="GO_Central"/>
</dbReference>
<dbReference type="GO" id="GO:0000770">
    <property type="term" value="P:peptide pheromone export"/>
    <property type="evidence" value="ECO:0000315"/>
    <property type="project" value="SGD"/>
</dbReference>
<dbReference type="GO" id="GO:0019236">
    <property type="term" value="P:response to pheromone"/>
    <property type="evidence" value="ECO:0007669"/>
    <property type="project" value="UniProtKB-KW"/>
</dbReference>
<dbReference type="CDD" id="cd18577">
    <property type="entry name" value="ABC_6TM_Pgp_ABCB1_D1_like"/>
    <property type="match status" value="1"/>
</dbReference>
<dbReference type="CDD" id="cd18578">
    <property type="entry name" value="ABC_6TM_Pgp_ABCB1_D2_like"/>
    <property type="match status" value="1"/>
</dbReference>
<dbReference type="FunFam" id="3.40.50.300:FF:001471">
    <property type="entry name" value="P-loop containing nucleoside triphosphate hydrolase protein"/>
    <property type="match status" value="1"/>
</dbReference>
<dbReference type="FunFam" id="3.40.50.300:FF:002679">
    <property type="entry name" value="Ste6p"/>
    <property type="match status" value="1"/>
</dbReference>
<dbReference type="Gene3D" id="1.20.1560.10">
    <property type="entry name" value="ABC transporter type 1, transmembrane domain"/>
    <property type="match status" value="1"/>
</dbReference>
<dbReference type="Gene3D" id="3.40.50.300">
    <property type="entry name" value="P-loop containing nucleotide triphosphate hydrolases"/>
    <property type="match status" value="2"/>
</dbReference>
<dbReference type="InterPro" id="IPR003593">
    <property type="entry name" value="AAA+_ATPase"/>
</dbReference>
<dbReference type="InterPro" id="IPR011527">
    <property type="entry name" value="ABC1_TM_dom"/>
</dbReference>
<dbReference type="InterPro" id="IPR036640">
    <property type="entry name" value="ABC1_TM_sf"/>
</dbReference>
<dbReference type="InterPro" id="IPR003439">
    <property type="entry name" value="ABC_transporter-like_ATP-bd"/>
</dbReference>
<dbReference type="InterPro" id="IPR017871">
    <property type="entry name" value="ABC_transporter-like_CS"/>
</dbReference>
<dbReference type="InterPro" id="IPR027417">
    <property type="entry name" value="P-loop_NTPase"/>
</dbReference>
<dbReference type="InterPro" id="IPR039421">
    <property type="entry name" value="Type_1_exporter"/>
</dbReference>
<dbReference type="PANTHER" id="PTHR43394:SF15">
    <property type="entry name" value="ALPHA-FACTOR-TRANSPORTING ATPASE"/>
    <property type="match status" value="1"/>
</dbReference>
<dbReference type="PANTHER" id="PTHR43394">
    <property type="entry name" value="ATP-DEPENDENT PERMEASE MDL1, MITOCHONDRIAL"/>
    <property type="match status" value="1"/>
</dbReference>
<dbReference type="Pfam" id="PF00664">
    <property type="entry name" value="ABC_membrane"/>
    <property type="match status" value="2"/>
</dbReference>
<dbReference type="Pfam" id="PF00005">
    <property type="entry name" value="ABC_tran"/>
    <property type="match status" value="2"/>
</dbReference>
<dbReference type="SMART" id="SM00382">
    <property type="entry name" value="AAA"/>
    <property type="match status" value="2"/>
</dbReference>
<dbReference type="SUPFAM" id="SSF90123">
    <property type="entry name" value="ABC transporter transmembrane region"/>
    <property type="match status" value="2"/>
</dbReference>
<dbReference type="SUPFAM" id="SSF52540">
    <property type="entry name" value="P-loop containing nucleoside triphosphate hydrolases"/>
    <property type="match status" value="2"/>
</dbReference>
<dbReference type="PROSITE" id="PS50929">
    <property type="entry name" value="ABC_TM1F"/>
    <property type="match status" value="2"/>
</dbReference>
<dbReference type="PROSITE" id="PS00211">
    <property type="entry name" value="ABC_TRANSPORTER_1"/>
    <property type="match status" value="2"/>
</dbReference>
<dbReference type="PROSITE" id="PS50893">
    <property type="entry name" value="ABC_TRANSPORTER_2"/>
    <property type="match status" value="2"/>
</dbReference>
<protein>
    <recommendedName>
        <fullName>Alpha-factor-transporting ATPase</fullName>
        <ecNumber>7.4.2.7</ecNumber>
    </recommendedName>
    <alternativeName>
        <fullName>Mating factor A secretion protein STE6</fullName>
    </alternativeName>
    <alternativeName>
        <fullName>Multiple drug resistance protein homolog</fullName>
    </alternativeName>
    <alternativeName>
        <fullName>P-glycoprotein</fullName>
    </alternativeName>
</protein>
<comment type="function">
    <text>STE6 is required in yeast MATA cells for production of A-factor pheromone. STE6 is involved in the transport of the farnesyl-derivation of the A-factor pheromone.</text>
</comment>
<comment type="catalytic activity">
    <reaction>
        <text>an [alpha-factor](in) + ATP + H2O = an [alpha-factor](out) + ADP + phosphate + H(+)</text>
        <dbReference type="Rhea" id="RHEA:10848"/>
        <dbReference type="Rhea" id="RHEA-COMP:11611"/>
        <dbReference type="ChEBI" id="CHEBI:15377"/>
        <dbReference type="ChEBI" id="CHEBI:15378"/>
        <dbReference type="ChEBI" id="CHEBI:30616"/>
        <dbReference type="ChEBI" id="CHEBI:43474"/>
        <dbReference type="ChEBI" id="CHEBI:83228"/>
        <dbReference type="ChEBI" id="CHEBI:456216"/>
        <dbReference type="EC" id="7.4.2.7"/>
    </reaction>
</comment>
<comment type="interaction">
    <interactant intactId="EBI-18383">
        <id>P12866</id>
    </interactant>
    <interactant intactId="EBI-18208">
        <id>P40318</id>
        <label>SSM4</label>
    </interactant>
    <organismsDiffer>false</organismsDiffer>
    <experiments>3</experiments>
</comment>
<comment type="subcellular location">
    <subcellularLocation>
        <location>Membrane</location>
        <topology>Multi-pass membrane protein</topology>
    </subcellularLocation>
</comment>
<comment type="PTM">
    <text evidence="6">Degraded via the ubiquitin system.</text>
</comment>
<comment type="similarity">
    <text evidence="7">Belongs to the ABC transporter superfamily. Alpha-factor sex pheromone exporter (TC 3.A.1.206) family.</text>
</comment>